<protein>
    <recommendedName>
        <fullName evidence="1">Guanylate kinase</fullName>
        <ecNumber evidence="1">2.7.4.8</ecNumber>
    </recommendedName>
    <alternativeName>
        <fullName evidence="1">GMP kinase</fullName>
    </alternativeName>
</protein>
<organism>
    <name type="scientific">Mannheimia succiniciproducens (strain KCTC 0769BP / MBEL55E)</name>
    <dbReference type="NCBI Taxonomy" id="221988"/>
    <lineage>
        <taxon>Bacteria</taxon>
        <taxon>Pseudomonadati</taxon>
        <taxon>Pseudomonadota</taxon>
        <taxon>Gammaproteobacteria</taxon>
        <taxon>Pasteurellales</taxon>
        <taxon>Pasteurellaceae</taxon>
        <taxon>Basfia</taxon>
    </lineage>
</organism>
<feature type="chain" id="PRO_0000170559" description="Guanylate kinase">
    <location>
        <begin position="1"/>
        <end position="208"/>
    </location>
</feature>
<feature type="domain" description="Guanylate kinase-like" evidence="1">
    <location>
        <begin position="4"/>
        <end position="185"/>
    </location>
</feature>
<feature type="binding site" evidence="1">
    <location>
        <begin position="11"/>
        <end position="18"/>
    </location>
    <ligand>
        <name>ATP</name>
        <dbReference type="ChEBI" id="CHEBI:30616"/>
    </ligand>
</feature>
<reference key="1">
    <citation type="journal article" date="2004" name="Nat. Biotechnol.">
        <title>The genome sequence of the capnophilic rumen bacterium Mannheimia succiniciproducens.</title>
        <authorList>
            <person name="Hong S.H."/>
            <person name="Kim J.S."/>
            <person name="Lee S.Y."/>
            <person name="In Y.H."/>
            <person name="Choi S.S."/>
            <person name="Rih J.-K."/>
            <person name="Kim C.H."/>
            <person name="Jeong H."/>
            <person name="Hur C.G."/>
            <person name="Kim J.J."/>
        </authorList>
    </citation>
    <scope>NUCLEOTIDE SEQUENCE [LARGE SCALE GENOMIC DNA]</scope>
    <source>
        <strain>KCTC 0769BP / MBEL55E</strain>
    </source>
</reference>
<name>KGUA_MANSM</name>
<sequence>MSQGNLYILSAPSGAGKSSLISALLEQDQANTMMVSVSHTTRQPRPGEENGVHYHFVSVEEFELLINEGAFLEYAKVFGGNYYGTSLPTIEKNLAQGIDVFLDIDWQGAQQIRKKVPSVKSIFILPPSLAELEKRLIGRGQDSAEVIADRMSKAMDEISHYNEYDYVIINDDFTRALADLVHILRAEKLTLAYQTEQNQALINQLLAK</sequence>
<comment type="function">
    <text evidence="1">Essential for recycling GMP and indirectly, cGMP.</text>
</comment>
<comment type="catalytic activity">
    <reaction evidence="1">
        <text>GMP + ATP = GDP + ADP</text>
        <dbReference type="Rhea" id="RHEA:20780"/>
        <dbReference type="ChEBI" id="CHEBI:30616"/>
        <dbReference type="ChEBI" id="CHEBI:58115"/>
        <dbReference type="ChEBI" id="CHEBI:58189"/>
        <dbReference type="ChEBI" id="CHEBI:456216"/>
        <dbReference type="EC" id="2.7.4.8"/>
    </reaction>
</comment>
<comment type="subcellular location">
    <subcellularLocation>
        <location evidence="1">Cytoplasm</location>
    </subcellularLocation>
</comment>
<comment type="similarity">
    <text evidence="1">Belongs to the guanylate kinase family.</text>
</comment>
<keyword id="KW-0067">ATP-binding</keyword>
<keyword id="KW-0963">Cytoplasm</keyword>
<keyword id="KW-0418">Kinase</keyword>
<keyword id="KW-0547">Nucleotide-binding</keyword>
<keyword id="KW-0808">Transferase</keyword>
<gene>
    <name evidence="1" type="primary">gmk</name>
    <name type="ordered locus">MS1738</name>
</gene>
<proteinExistence type="inferred from homology"/>
<evidence type="ECO:0000255" key="1">
    <source>
        <dbReference type="HAMAP-Rule" id="MF_00328"/>
    </source>
</evidence>
<accession>Q65RR5</accession>
<dbReference type="EC" id="2.7.4.8" evidence="1"/>
<dbReference type="EMBL" id="AE016827">
    <property type="protein sequence ID" value="AAU38345.1"/>
    <property type="molecule type" value="Genomic_DNA"/>
</dbReference>
<dbReference type="RefSeq" id="WP_011200904.1">
    <property type="nucleotide sequence ID" value="NC_006300.1"/>
</dbReference>
<dbReference type="SMR" id="Q65RR5"/>
<dbReference type="STRING" id="221988.MS1738"/>
<dbReference type="KEGG" id="msu:MS1738"/>
<dbReference type="eggNOG" id="COG0194">
    <property type="taxonomic scope" value="Bacteria"/>
</dbReference>
<dbReference type="HOGENOM" id="CLU_001715_1_0_6"/>
<dbReference type="OrthoDB" id="9808150at2"/>
<dbReference type="Proteomes" id="UP000000607">
    <property type="component" value="Chromosome"/>
</dbReference>
<dbReference type="GO" id="GO:0005829">
    <property type="term" value="C:cytosol"/>
    <property type="evidence" value="ECO:0007669"/>
    <property type="project" value="TreeGrafter"/>
</dbReference>
<dbReference type="GO" id="GO:0005524">
    <property type="term" value="F:ATP binding"/>
    <property type="evidence" value="ECO:0007669"/>
    <property type="project" value="UniProtKB-UniRule"/>
</dbReference>
<dbReference type="GO" id="GO:0004385">
    <property type="term" value="F:guanylate kinase activity"/>
    <property type="evidence" value="ECO:0007669"/>
    <property type="project" value="UniProtKB-UniRule"/>
</dbReference>
<dbReference type="CDD" id="cd00071">
    <property type="entry name" value="GMPK"/>
    <property type="match status" value="1"/>
</dbReference>
<dbReference type="FunFam" id="3.40.50.300:FF:000855">
    <property type="entry name" value="Guanylate kinase"/>
    <property type="match status" value="1"/>
</dbReference>
<dbReference type="FunFam" id="3.30.63.10:FF:000002">
    <property type="entry name" value="Guanylate kinase 1"/>
    <property type="match status" value="1"/>
</dbReference>
<dbReference type="Gene3D" id="3.30.63.10">
    <property type="entry name" value="Guanylate Kinase phosphate binding domain"/>
    <property type="match status" value="1"/>
</dbReference>
<dbReference type="Gene3D" id="3.40.50.300">
    <property type="entry name" value="P-loop containing nucleotide triphosphate hydrolases"/>
    <property type="match status" value="1"/>
</dbReference>
<dbReference type="HAMAP" id="MF_00328">
    <property type="entry name" value="Guanylate_kinase"/>
    <property type="match status" value="1"/>
</dbReference>
<dbReference type="InterPro" id="IPR008145">
    <property type="entry name" value="GK/Ca_channel_bsu"/>
</dbReference>
<dbReference type="InterPro" id="IPR008144">
    <property type="entry name" value="Guanylate_kin-like_dom"/>
</dbReference>
<dbReference type="InterPro" id="IPR017665">
    <property type="entry name" value="Guanylate_kinase"/>
</dbReference>
<dbReference type="InterPro" id="IPR020590">
    <property type="entry name" value="Guanylate_kinase_CS"/>
</dbReference>
<dbReference type="InterPro" id="IPR027417">
    <property type="entry name" value="P-loop_NTPase"/>
</dbReference>
<dbReference type="NCBIfam" id="TIGR03263">
    <property type="entry name" value="guanyl_kin"/>
    <property type="match status" value="1"/>
</dbReference>
<dbReference type="PANTHER" id="PTHR23117:SF13">
    <property type="entry name" value="GUANYLATE KINASE"/>
    <property type="match status" value="1"/>
</dbReference>
<dbReference type="PANTHER" id="PTHR23117">
    <property type="entry name" value="GUANYLATE KINASE-RELATED"/>
    <property type="match status" value="1"/>
</dbReference>
<dbReference type="Pfam" id="PF00625">
    <property type="entry name" value="Guanylate_kin"/>
    <property type="match status" value="1"/>
</dbReference>
<dbReference type="SMART" id="SM00072">
    <property type="entry name" value="GuKc"/>
    <property type="match status" value="1"/>
</dbReference>
<dbReference type="SUPFAM" id="SSF52540">
    <property type="entry name" value="P-loop containing nucleoside triphosphate hydrolases"/>
    <property type="match status" value="1"/>
</dbReference>
<dbReference type="PROSITE" id="PS00856">
    <property type="entry name" value="GUANYLATE_KINASE_1"/>
    <property type="match status" value="1"/>
</dbReference>
<dbReference type="PROSITE" id="PS50052">
    <property type="entry name" value="GUANYLATE_KINASE_2"/>
    <property type="match status" value="1"/>
</dbReference>